<gene>
    <name type="primary">TFCB</name>
    <name type="synonym">EMB2804</name>
    <name type="synonym">TBCB</name>
    <name type="ordered locus">At3g10220</name>
    <name type="ORF">F14P13.18</name>
</gene>
<keyword id="KW-0002">3D-structure</keyword>
<keyword id="KW-0143">Chaperone</keyword>
<keyword id="KW-0963">Cytoplasm</keyword>
<keyword id="KW-1185">Reference proteome</keyword>
<evidence type="ECO:0000255" key="1">
    <source>
        <dbReference type="PROSITE-ProRule" id="PRU00045"/>
    </source>
</evidence>
<evidence type="ECO:0000269" key="2">
    <source>
    </source>
</evidence>
<evidence type="ECO:0000269" key="3">
    <source>
    </source>
</evidence>
<evidence type="ECO:0000305" key="4"/>
<evidence type="ECO:0007829" key="5">
    <source>
        <dbReference type="PDB" id="2KJ6"/>
    </source>
</evidence>
<reference key="1">
    <citation type="journal article" date="2002" name="Genes Dev.">
        <title>The Arabidopsis PILZ group genes encode tubulin-folding cofactor orthologs required for cell division but not cell growth.</title>
        <authorList>
            <person name="Steinborn K."/>
            <person name="Maulbetsch C."/>
            <person name="Priester B."/>
            <person name="Trautmann S."/>
            <person name="Pacher T."/>
            <person name="Geiges B."/>
            <person name="Kuettner F."/>
            <person name="Lepiniec L."/>
            <person name="Stierhof Y.-D."/>
            <person name="Schwarz H."/>
            <person name="Juergens G."/>
            <person name="Mayer U."/>
        </authorList>
    </citation>
    <scope>NUCLEOTIDE SEQUENCE [MRNA]</scope>
    <source>
        <strain>cv. Landsberg erecta</strain>
        <strain>cv. Wassilewskija</strain>
        <tissue>Flower</tissue>
    </source>
</reference>
<reference key="2">
    <citation type="journal article" date="2000" name="Nature">
        <title>Sequence and analysis of chromosome 3 of the plant Arabidopsis thaliana.</title>
        <authorList>
            <person name="Salanoubat M."/>
            <person name="Lemcke K."/>
            <person name="Rieger M."/>
            <person name="Ansorge W."/>
            <person name="Unseld M."/>
            <person name="Fartmann B."/>
            <person name="Valle G."/>
            <person name="Bloecker H."/>
            <person name="Perez-Alonso M."/>
            <person name="Obermaier B."/>
            <person name="Delseny M."/>
            <person name="Boutry M."/>
            <person name="Grivell L.A."/>
            <person name="Mache R."/>
            <person name="Puigdomenech P."/>
            <person name="De Simone V."/>
            <person name="Choisne N."/>
            <person name="Artiguenave F."/>
            <person name="Robert C."/>
            <person name="Brottier P."/>
            <person name="Wincker P."/>
            <person name="Cattolico L."/>
            <person name="Weissenbach J."/>
            <person name="Saurin W."/>
            <person name="Quetier F."/>
            <person name="Schaefer M."/>
            <person name="Mueller-Auer S."/>
            <person name="Gabel C."/>
            <person name="Fuchs M."/>
            <person name="Benes V."/>
            <person name="Wurmbach E."/>
            <person name="Drzonek H."/>
            <person name="Erfle H."/>
            <person name="Jordan N."/>
            <person name="Bangert S."/>
            <person name="Wiedelmann R."/>
            <person name="Kranz H."/>
            <person name="Voss H."/>
            <person name="Holland R."/>
            <person name="Brandt P."/>
            <person name="Nyakatura G."/>
            <person name="Vezzi A."/>
            <person name="D'Angelo M."/>
            <person name="Pallavicini A."/>
            <person name="Toppo S."/>
            <person name="Simionati B."/>
            <person name="Conrad A."/>
            <person name="Hornischer K."/>
            <person name="Kauer G."/>
            <person name="Loehnert T.-H."/>
            <person name="Nordsiek G."/>
            <person name="Reichelt J."/>
            <person name="Scharfe M."/>
            <person name="Schoen O."/>
            <person name="Bargues M."/>
            <person name="Terol J."/>
            <person name="Climent J."/>
            <person name="Navarro P."/>
            <person name="Collado C."/>
            <person name="Perez-Perez A."/>
            <person name="Ottenwaelder B."/>
            <person name="Duchemin D."/>
            <person name="Cooke R."/>
            <person name="Laudie M."/>
            <person name="Berger-Llauro C."/>
            <person name="Purnelle B."/>
            <person name="Masuy D."/>
            <person name="de Haan M."/>
            <person name="Maarse A.C."/>
            <person name="Alcaraz J.-P."/>
            <person name="Cottet A."/>
            <person name="Casacuberta E."/>
            <person name="Monfort A."/>
            <person name="Argiriou A."/>
            <person name="Flores M."/>
            <person name="Liguori R."/>
            <person name="Vitale D."/>
            <person name="Mannhaupt G."/>
            <person name="Haase D."/>
            <person name="Schoof H."/>
            <person name="Rudd S."/>
            <person name="Zaccaria P."/>
            <person name="Mewes H.-W."/>
            <person name="Mayer K.F.X."/>
            <person name="Kaul S."/>
            <person name="Town C.D."/>
            <person name="Koo H.L."/>
            <person name="Tallon L.J."/>
            <person name="Jenkins J."/>
            <person name="Rooney T."/>
            <person name="Rizzo M."/>
            <person name="Walts A."/>
            <person name="Utterback T."/>
            <person name="Fujii C.Y."/>
            <person name="Shea T.P."/>
            <person name="Creasy T.H."/>
            <person name="Haas B."/>
            <person name="Maiti R."/>
            <person name="Wu D."/>
            <person name="Peterson J."/>
            <person name="Van Aken S."/>
            <person name="Pai G."/>
            <person name="Militscher J."/>
            <person name="Sellers P."/>
            <person name="Gill J.E."/>
            <person name="Feldblyum T.V."/>
            <person name="Preuss D."/>
            <person name="Lin X."/>
            <person name="Nierman W.C."/>
            <person name="Salzberg S.L."/>
            <person name="White O."/>
            <person name="Venter J.C."/>
            <person name="Fraser C.M."/>
            <person name="Kaneko T."/>
            <person name="Nakamura Y."/>
            <person name="Sato S."/>
            <person name="Kato T."/>
            <person name="Asamizu E."/>
            <person name="Sasamoto S."/>
            <person name="Kimura T."/>
            <person name="Idesawa K."/>
            <person name="Kawashima K."/>
            <person name="Kishida Y."/>
            <person name="Kiyokawa C."/>
            <person name="Kohara M."/>
            <person name="Matsumoto M."/>
            <person name="Matsuno A."/>
            <person name="Muraki A."/>
            <person name="Nakayama S."/>
            <person name="Nakazaki N."/>
            <person name="Shinpo S."/>
            <person name="Takeuchi C."/>
            <person name="Wada T."/>
            <person name="Watanabe A."/>
            <person name="Yamada M."/>
            <person name="Yasuda M."/>
            <person name="Tabata S."/>
        </authorList>
    </citation>
    <scope>NUCLEOTIDE SEQUENCE [LARGE SCALE GENOMIC DNA]</scope>
    <source>
        <strain>cv. Columbia</strain>
    </source>
</reference>
<reference key="3">
    <citation type="journal article" date="2017" name="Plant J.">
        <title>Araport11: a complete reannotation of the Arabidopsis thaliana reference genome.</title>
        <authorList>
            <person name="Cheng C.Y."/>
            <person name="Krishnakumar V."/>
            <person name="Chan A.P."/>
            <person name="Thibaud-Nissen F."/>
            <person name="Schobel S."/>
            <person name="Town C.D."/>
        </authorList>
    </citation>
    <scope>GENOME REANNOTATION</scope>
    <source>
        <strain>cv. Columbia</strain>
    </source>
</reference>
<reference key="4">
    <citation type="submission" date="2004-09" db="EMBL/GenBank/DDBJ databases">
        <title>Large-scale analysis of RIKEN Arabidopsis full-length (RAFL) cDNAs.</title>
        <authorList>
            <person name="Totoki Y."/>
            <person name="Seki M."/>
            <person name="Ishida J."/>
            <person name="Nakajima M."/>
            <person name="Enju A."/>
            <person name="Kamiya A."/>
            <person name="Narusaka M."/>
            <person name="Shin-i T."/>
            <person name="Nakagawa M."/>
            <person name="Sakamoto N."/>
            <person name="Oishi K."/>
            <person name="Kohara Y."/>
            <person name="Kobayashi M."/>
            <person name="Toyoda A."/>
            <person name="Sakaki Y."/>
            <person name="Sakurai T."/>
            <person name="Iida K."/>
            <person name="Akiyama K."/>
            <person name="Satou M."/>
            <person name="Toyoda T."/>
            <person name="Konagaya A."/>
            <person name="Carninci P."/>
            <person name="Kawai J."/>
            <person name="Hayashizaki Y."/>
            <person name="Shinozaki K."/>
        </authorList>
    </citation>
    <scope>NUCLEOTIDE SEQUENCE [LARGE SCALE MRNA]</scope>
    <source>
        <strain>cv. Columbia</strain>
    </source>
</reference>
<reference key="5">
    <citation type="journal article" date="2006" name="Plant Cell Physiol.">
        <title>Arabidopsis tubulin folding cofactor B interacts with alpha-tubulin in vivo.</title>
        <authorList>
            <person name="Dhonukshe P."/>
            <person name="Bargmann B.O."/>
            <person name="Gadella T.W. Jr."/>
        </authorList>
    </citation>
    <scope>TISSUE SPECIFICITY</scope>
    <scope>SUBCELLULAR LOCATION</scope>
    <scope>INTERACTION WITH TUBA6</scope>
</reference>
<reference key="6">
    <citation type="journal article" date="2010" name="Front. Biosci.">
        <title>AtTFC B is involved in control of cell division.</title>
        <authorList>
            <person name="Du Y."/>
            <person name="Cui M."/>
            <person name="Qian D."/>
            <person name="Zhu L."/>
            <person name="Wei C."/>
            <person name="Yuan M."/>
            <person name="Zhang Z."/>
            <person name="Li Y."/>
        </authorList>
    </citation>
    <scope>FUNCTION</scope>
    <scope>TISSUE SPECIFICITY</scope>
    <scope>DISRUPTION PHENOTYPE</scope>
</reference>
<reference key="7">
    <citation type="submission" date="2009-05" db="PDB data bank">
        <title>NMR Solution Structure of Tbulin folding Cofactor B obtained from Arabidopsis thaliana: Northeast.</title>
        <authorList>
            <person name="Mani R."/>
            <person name="Swapna G.V.T."/>
            <person name="Shastry R."/>
            <person name="Foote E."/>
            <person name="Ciccosanti C."/>
            <person name="Jiang M."/>
            <person name="Xiao R."/>
            <person name="Nair R."/>
            <person name="Everett J."/>
            <person name="Huang Y.J."/>
            <person name="Acton T."/>
            <person name="Rost B."/>
            <person name="Montelione G.T."/>
        </authorList>
    </citation>
    <scope>STRUCTURE BY NMR OF 10-96</scope>
</reference>
<dbReference type="EMBL" id="AF486849">
    <property type="protein sequence ID" value="AAM22958.1"/>
    <property type="molecule type" value="mRNA"/>
</dbReference>
<dbReference type="EMBL" id="AC009400">
    <property type="protein sequence ID" value="AAF02820.1"/>
    <property type="status" value="ALT_SEQ"/>
    <property type="molecule type" value="Genomic_DNA"/>
</dbReference>
<dbReference type="EMBL" id="CP002686">
    <property type="protein sequence ID" value="AEE74873.1"/>
    <property type="molecule type" value="Genomic_DNA"/>
</dbReference>
<dbReference type="EMBL" id="AK176183">
    <property type="protein sequence ID" value="BAD43946.1"/>
    <property type="molecule type" value="mRNA"/>
</dbReference>
<dbReference type="EMBL" id="AK176266">
    <property type="protein sequence ID" value="BAD44029.1"/>
    <property type="molecule type" value="mRNA"/>
</dbReference>
<dbReference type="EMBL" id="AK176704">
    <property type="protein sequence ID" value="BAD44467.1"/>
    <property type="molecule type" value="mRNA"/>
</dbReference>
<dbReference type="RefSeq" id="NP_187633.2">
    <property type="nucleotide sequence ID" value="NM_111857.5"/>
</dbReference>
<dbReference type="PDB" id="2KJ6">
    <property type="method" value="NMR"/>
    <property type="chains" value="A=10-96"/>
</dbReference>
<dbReference type="PDBsum" id="2KJ6"/>
<dbReference type="BMRB" id="Q67Z52"/>
<dbReference type="SMR" id="Q67Z52"/>
<dbReference type="FunCoup" id="Q67Z52">
    <property type="interactions" value="4351"/>
</dbReference>
<dbReference type="STRING" id="3702.Q67Z52"/>
<dbReference type="PaxDb" id="3702-AT3G10220.1"/>
<dbReference type="ProteomicsDB" id="233015"/>
<dbReference type="EnsemblPlants" id="AT3G10220.1">
    <property type="protein sequence ID" value="AT3G10220.1"/>
    <property type="gene ID" value="AT3G10220"/>
</dbReference>
<dbReference type="GeneID" id="820184"/>
<dbReference type="Gramene" id="AT3G10220.1">
    <property type="protein sequence ID" value="AT3G10220.1"/>
    <property type="gene ID" value="AT3G10220"/>
</dbReference>
<dbReference type="KEGG" id="ath:AT3G10220"/>
<dbReference type="Araport" id="AT3G10220"/>
<dbReference type="TAIR" id="AT3G10220">
    <property type="gene designation" value="EMB2804"/>
</dbReference>
<dbReference type="eggNOG" id="KOG3206">
    <property type="taxonomic scope" value="Eukaryota"/>
</dbReference>
<dbReference type="HOGENOM" id="CLU_067577_3_0_1"/>
<dbReference type="InParanoid" id="Q67Z52"/>
<dbReference type="OMA" id="DQYEQRT"/>
<dbReference type="OrthoDB" id="1030245at2759"/>
<dbReference type="PhylomeDB" id="Q67Z52"/>
<dbReference type="EvolutionaryTrace" id="Q67Z52"/>
<dbReference type="PRO" id="PR:Q67Z52"/>
<dbReference type="Proteomes" id="UP000006548">
    <property type="component" value="Chromosome 3"/>
</dbReference>
<dbReference type="ExpressionAtlas" id="Q67Z52">
    <property type="expression patterns" value="baseline and differential"/>
</dbReference>
<dbReference type="GO" id="GO:0005737">
    <property type="term" value="C:cytoplasm"/>
    <property type="evidence" value="ECO:0007005"/>
    <property type="project" value="TAIR"/>
</dbReference>
<dbReference type="GO" id="GO:0005829">
    <property type="term" value="C:cytosol"/>
    <property type="evidence" value="ECO:0000314"/>
    <property type="project" value="UniProtKB"/>
</dbReference>
<dbReference type="GO" id="GO:0005634">
    <property type="term" value="C:nucleus"/>
    <property type="evidence" value="ECO:0007005"/>
    <property type="project" value="TAIR"/>
</dbReference>
<dbReference type="GO" id="GO:0009524">
    <property type="term" value="C:phragmoplast"/>
    <property type="evidence" value="ECO:0007005"/>
    <property type="project" value="TAIR"/>
</dbReference>
<dbReference type="GO" id="GO:0043014">
    <property type="term" value="F:alpha-tubulin binding"/>
    <property type="evidence" value="ECO:0007669"/>
    <property type="project" value="InterPro"/>
</dbReference>
<dbReference type="GO" id="GO:0051301">
    <property type="term" value="P:cell division"/>
    <property type="evidence" value="ECO:0000315"/>
    <property type="project" value="TAIR"/>
</dbReference>
<dbReference type="GO" id="GO:0009793">
    <property type="term" value="P:embryo development ending in seed dormancy"/>
    <property type="evidence" value="ECO:0000315"/>
    <property type="project" value="TAIR"/>
</dbReference>
<dbReference type="GO" id="GO:0007023">
    <property type="term" value="P:post-chaperonin tubulin folding pathway"/>
    <property type="evidence" value="ECO:0007669"/>
    <property type="project" value="InterPro"/>
</dbReference>
<dbReference type="GO" id="GO:0007021">
    <property type="term" value="P:tubulin complex assembly"/>
    <property type="evidence" value="ECO:0007669"/>
    <property type="project" value="InterPro"/>
</dbReference>
<dbReference type="CDD" id="cd01789">
    <property type="entry name" value="Ubl_TBCB"/>
    <property type="match status" value="1"/>
</dbReference>
<dbReference type="FunFam" id="2.30.30.190:FF:000013">
    <property type="entry name" value="Tubulin-folding cofactor B"/>
    <property type="match status" value="1"/>
</dbReference>
<dbReference type="Gene3D" id="2.30.30.190">
    <property type="entry name" value="CAP Gly-rich-like domain"/>
    <property type="match status" value="1"/>
</dbReference>
<dbReference type="Gene3D" id="3.10.20.90">
    <property type="entry name" value="Phosphatidylinositol 3-kinase Catalytic Subunit, Chain A, domain 1"/>
    <property type="match status" value="1"/>
</dbReference>
<dbReference type="InterPro" id="IPR036859">
    <property type="entry name" value="CAP-Gly_dom_sf"/>
</dbReference>
<dbReference type="InterPro" id="IPR000938">
    <property type="entry name" value="CAP-Gly_domain"/>
</dbReference>
<dbReference type="InterPro" id="IPR045172">
    <property type="entry name" value="TBCB_Ubl"/>
</dbReference>
<dbReference type="InterPro" id="IPR000626">
    <property type="entry name" value="Ubiquitin-like_dom"/>
</dbReference>
<dbReference type="InterPro" id="IPR029071">
    <property type="entry name" value="Ubiquitin-like_domsf"/>
</dbReference>
<dbReference type="PANTHER" id="PTHR18916">
    <property type="entry name" value="DYNACTIN 1-RELATED MICROTUBULE-BINDING"/>
    <property type="match status" value="1"/>
</dbReference>
<dbReference type="PANTHER" id="PTHR18916:SF85">
    <property type="entry name" value="TUBULIN-FOLDING COFACTOR B"/>
    <property type="match status" value="1"/>
</dbReference>
<dbReference type="Pfam" id="PF01302">
    <property type="entry name" value="CAP_GLY"/>
    <property type="match status" value="1"/>
</dbReference>
<dbReference type="Pfam" id="PF14560">
    <property type="entry name" value="Ubiquitin_2"/>
    <property type="match status" value="1"/>
</dbReference>
<dbReference type="SMART" id="SM01052">
    <property type="entry name" value="CAP_GLY"/>
    <property type="match status" value="1"/>
</dbReference>
<dbReference type="SUPFAM" id="SSF74924">
    <property type="entry name" value="Cap-Gly domain"/>
    <property type="match status" value="1"/>
</dbReference>
<dbReference type="SUPFAM" id="SSF54236">
    <property type="entry name" value="Ubiquitin-like"/>
    <property type="match status" value="1"/>
</dbReference>
<dbReference type="PROSITE" id="PS50245">
    <property type="entry name" value="CAP_GLY_2"/>
    <property type="match status" value="1"/>
</dbReference>
<organism>
    <name type="scientific">Arabidopsis thaliana</name>
    <name type="common">Mouse-ear cress</name>
    <dbReference type="NCBI Taxonomy" id="3702"/>
    <lineage>
        <taxon>Eukaryota</taxon>
        <taxon>Viridiplantae</taxon>
        <taxon>Streptophyta</taxon>
        <taxon>Embryophyta</taxon>
        <taxon>Tracheophyta</taxon>
        <taxon>Spermatophyta</taxon>
        <taxon>Magnoliopsida</taxon>
        <taxon>eudicotyledons</taxon>
        <taxon>Gunneridae</taxon>
        <taxon>Pentapetalae</taxon>
        <taxon>rosids</taxon>
        <taxon>malvids</taxon>
        <taxon>Brassicales</taxon>
        <taxon>Brassicaceae</taxon>
        <taxon>Camelineae</taxon>
        <taxon>Arabidopsis</taxon>
    </lineage>
</organism>
<sequence length="243" mass="27331">MATSRLQLEGDDSVHLHITHANLKSFSADARFSPQMSVEAVKEKLWKKCGTSVNSMALELYDDSGSKVAVLSDDSRPLGFFSPFDGFRLHIIDLDPSSVTTGGWLEDTSLVEKYNISEEDYAKRTDSFRKFKEKRVSQNPVAAEAKTKENYMEDLCANIKVGDRCQVEPGEKRGMVKYVGRAESLGPGYWVGIQYDEPLGKHDGMVKGTRFFECPRLQGGMVRPDKVKVGDYPERDPFEEDEI</sequence>
<protein>
    <recommendedName>
        <fullName>Tubulin-folding cofactor B</fullName>
        <shortName>AtTFCB</shortName>
    </recommendedName>
    <alternativeName>
        <fullName>Protein EMBRYO DEFECTIVE 2804</fullName>
    </alternativeName>
</protein>
<feature type="chain" id="PRO_0000423499" description="Tubulin-folding cofactor B">
    <location>
        <begin position="1"/>
        <end position="243"/>
    </location>
</feature>
<feature type="domain" description="CAP-Gly" evidence="1">
    <location>
        <begin position="181"/>
        <end position="223"/>
    </location>
</feature>
<feature type="sequence conflict" description="In Ref. 4; BAD44467." evidence="4" ref="4">
    <original>E</original>
    <variation>G</variation>
    <location>
        <position position="43"/>
    </location>
</feature>
<feature type="sequence conflict" description="In Ref. 1; AAM22958." evidence="4" ref="1">
    <original>S</original>
    <variation>F</variation>
    <location>
        <position position="75"/>
    </location>
</feature>
<feature type="strand" evidence="5">
    <location>
        <begin position="14"/>
        <end position="20"/>
    </location>
</feature>
<feature type="strand" evidence="5">
    <location>
        <begin position="28"/>
        <end position="32"/>
    </location>
</feature>
<feature type="helix" evidence="5">
    <location>
        <begin position="38"/>
        <end position="49"/>
    </location>
</feature>
<feature type="strand" evidence="5">
    <location>
        <begin position="55"/>
        <end position="61"/>
    </location>
</feature>
<feature type="strand" evidence="5">
    <location>
        <begin position="63"/>
        <end position="65"/>
    </location>
</feature>
<feature type="helix" evidence="5">
    <location>
        <begin position="73"/>
        <end position="75"/>
    </location>
</feature>
<feature type="helix" evidence="5">
    <location>
        <begin position="78"/>
        <end position="81"/>
    </location>
</feature>
<feature type="strand" evidence="5">
    <location>
        <begin position="88"/>
        <end position="93"/>
    </location>
</feature>
<comment type="function">
    <text evidence="3">Involved in control of cell division. Regulates probably the availability of alpha-tubulin for dimerization of alpha-/beta-tubulin, which is required for proper microtubule biogenesis. Decreased expression of TFCB results in enlarged mesophyll cells and leaf epidermal cells with bulged nuclei, increased ploidy and increased numbers of spindles and phragmoplasts.</text>
</comment>
<comment type="subunit">
    <text evidence="2">Supercomplex made of cofactors A to E. Cofactors A and D function by capturing and stabilizing tubulin in a quasi-native conformation. Cofactor E binds to the cofactor D-tubulin complex; interaction with cofactor C then causes the release of tubulin polypeptides that are committed to the native state. Interacts with TUBA6.</text>
</comment>
<comment type="subcellular location">
    <subcellularLocation>
        <location evidence="2">Cytoplasm</location>
    </subcellularLocation>
    <text>Not associated with microtubular arrays.</text>
</comment>
<comment type="tissue specificity">
    <text evidence="2 3">Expressed in roots, stems, leaves, flowers and siliques.</text>
</comment>
<comment type="disruption phenotype">
    <text evidence="3">Embryo lethality.</text>
</comment>
<comment type="similarity">
    <text evidence="4">Belongs to the TBCB family.</text>
</comment>
<comment type="sequence caution" evidence="4">
    <conflict type="erroneous gene model prediction">
        <sequence resource="EMBL-CDS" id="AAF02820"/>
    </conflict>
</comment>
<accession>Q67Z52</accession>
<accession>Q67XW4</accession>
<accession>Q8L5R5</accession>
<accession>Q9SS34</accession>
<name>TBCB_ARATH</name>
<proteinExistence type="evidence at protein level"/>